<keyword id="KW-0963">Cytoplasm</keyword>
<keyword id="KW-0620">Polyamine biosynthesis</keyword>
<keyword id="KW-1185">Reference proteome</keyword>
<keyword id="KW-0745">Spermidine biosynthesis</keyword>
<keyword id="KW-0808">Transferase</keyword>
<protein>
    <recommendedName>
        <fullName evidence="1">Polyamine aminopropyltransferase</fullName>
    </recommendedName>
    <alternativeName>
        <fullName evidence="1">Putrescine aminopropyltransferase</fullName>
        <shortName evidence="1">PAPT</shortName>
    </alternativeName>
    <alternativeName>
        <fullName evidence="1">Spermidine synthase</fullName>
        <shortName evidence="1">SPDS</shortName>
        <shortName evidence="1">SPDSY</shortName>
        <ecNumber evidence="1">2.5.1.16</ecNumber>
    </alternativeName>
</protein>
<dbReference type="EC" id="2.5.1.16" evidence="1"/>
<dbReference type="EMBL" id="CP000377">
    <property type="protein sequence ID" value="ABF64122.1"/>
    <property type="molecule type" value="Genomic_DNA"/>
</dbReference>
<dbReference type="RefSeq" id="WP_011538726.1">
    <property type="nucleotide sequence ID" value="NC_008044.1"/>
</dbReference>
<dbReference type="SMR" id="Q1GGU4"/>
<dbReference type="STRING" id="292414.TM1040_1389"/>
<dbReference type="KEGG" id="sit:TM1040_1389"/>
<dbReference type="eggNOG" id="COG0421">
    <property type="taxonomic scope" value="Bacteria"/>
</dbReference>
<dbReference type="HOGENOM" id="CLU_048199_1_0_5"/>
<dbReference type="OrthoDB" id="9793120at2"/>
<dbReference type="UniPathway" id="UPA00248">
    <property type="reaction ID" value="UER00314"/>
</dbReference>
<dbReference type="Proteomes" id="UP000000636">
    <property type="component" value="Chromosome"/>
</dbReference>
<dbReference type="GO" id="GO:0005829">
    <property type="term" value="C:cytosol"/>
    <property type="evidence" value="ECO:0007669"/>
    <property type="project" value="TreeGrafter"/>
</dbReference>
<dbReference type="GO" id="GO:0004766">
    <property type="term" value="F:spermidine synthase activity"/>
    <property type="evidence" value="ECO:0007669"/>
    <property type="project" value="UniProtKB-UniRule"/>
</dbReference>
<dbReference type="GO" id="GO:0008295">
    <property type="term" value="P:spermidine biosynthetic process"/>
    <property type="evidence" value="ECO:0007669"/>
    <property type="project" value="UniProtKB-UniRule"/>
</dbReference>
<dbReference type="CDD" id="cd02440">
    <property type="entry name" value="AdoMet_MTases"/>
    <property type="match status" value="1"/>
</dbReference>
<dbReference type="Gene3D" id="2.30.140.10">
    <property type="entry name" value="Spermidine synthase, tetramerisation domain"/>
    <property type="match status" value="1"/>
</dbReference>
<dbReference type="Gene3D" id="3.40.50.150">
    <property type="entry name" value="Vaccinia Virus protein VP39"/>
    <property type="match status" value="1"/>
</dbReference>
<dbReference type="HAMAP" id="MF_00198">
    <property type="entry name" value="Spermidine_synth"/>
    <property type="match status" value="1"/>
</dbReference>
<dbReference type="InterPro" id="IPR030374">
    <property type="entry name" value="PABS"/>
</dbReference>
<dbReference type="InterPro" id="IPR030373">
    <property type="entry name" value="PABS_CS"/>
</dbReference>
<dbReference type="InterPro" id="IPR029063">
    <property type="entry name" value="SAM-dependent_MTases_sf"/>
</dbReference>
<dbReference type="InterPro" id="IPR001045">
    <property type="entry name" value="Spermi_synthase"/>
</dbReference>
<dbReference type="InterPro" id="IPR035246">
    <property type="entry name" value="Spermidine_synt_N"/>
</dbReference>
<dbReference type="InterPro" id="IPR037163">
    <property type="entry name" value="Spermidine_synt_N_sf"/>
</dbReference>
<dbReference type="NCBIfam" id="NF002010">
    <property type="entry name" value="PRK00811.1"/>
    <property type="match status" value="1"/>
</dbReference>
<dbReference type="NCBIfam" id="TIGR00417">
    <property type="entry name" value="speE"/>
    <property type="match status" value="1"/>
</dbReference>
<dbReference type="PANTHER" id="PTHR11558:SF11">
    <property type="entry name" value="SPERMIDINE SYNTHASE"/>
    <property type="match status" value="1"/>
</dbReference>
<dbReference type="PANTHER" id="PTHR11558">
    <property type="entry name" value="SPERMIDINE/SPERMINE SYNTHASE"/>
    <property type="match status" value="1"/>
</dbReference>
<dbReference type="Pfam" id="PF17284">
    <property type="entry name" value="Spermine_synt_N"/>
    <property type="match status" value="1"/>
</dbReference>
<dbReference type="Pfam" id="PF01564">
    <property type="entry name" value="Spermine_synth"/>
    <property type="match status" value="1"/>
</dbReference>
<dbReference type="SUPFAM" id="SSF53335">
    <property type="entry name" value="S-adenosyl-L-methionine-dependent methyltransferases"/>
    <property type="match status" value="1"/>
</dbReference>
<dbReference type="PROSITE" id="PS01330">
    <property type="entry name" value="PABS_1"/>
    <property type="match status" value="1"/>
</dbReference>
<dbReference type="PROSITE" id="PS51006">
    <property type="entry name" value="PABS_2"/>
    <property type="match status" value="1"/>
</dbReference>
<accession>Q1GGU4</accession>
<name>SPEE_RUEST</name>
<reference key="1">
    <citation type="submission" date="2006-05" db="EMBL/GenBank/DDBJ databases">
        <title>Complete sequence of chromosome of Silicibacter sp. TM1040.</title>
        <authorList>
            <consortium name="US DOE Joint Genome Institute"/>
            <person name="Copeland A."/>
            <person name="Lucas S."/>
            <person name="Lapidus A."/>
            <person name="Barry K."/>
            <person name="Detter J.C."/>
            <person name="Glavina del Rio T."/>
            <person name="Hammon N."/>
            <person name="Israni S."/>
            <person name="Dalin E."/>
            <person name="Tice H."/>
            <person name="Pitluck S."/>
            <person name="Brettin T."/>
            <person name="Bruce D."/>
            <person name="Han C."/>
            <person name="Tapia R."/>
            <person name="Goodwin L."/>
            <person name="Thompson L.S."/>
            <person name="Gilna P."/>
            <person name="Schmutz J."/>
            <person name="Larimer F."/>
            <person name="Land M."/>
            <person name="Hauser L."/>
            <person name="Kyrpides N."/>
            <person name="Kim E."/>
            <person name="Belas R."/>
            <person name="Moran M.A."/>
            <person name="Buchan A."/>
            <person name="Gonzalez J.M."/>
            <person name="Schell M.A."/>
            <person name="Sun F."/>
            <person name="Richardson P."/>
        </authorList>
    </citation>
    <scope>NUCLEOTIDE SEQUENCE [LARGE SCALE GENOMIC DNA]</scope>
    <source>
        <strain>TM1040</strain>
    </source>
</reference>
<organism>
    <name type="scientific">Ruegeria sp. (strain TM1040)</name>
    <name type="common">Silicibacter sp.</name>
    <dbReference type="NCBI Taxonomy" id="292414"/>
    <lineage>
        <taxon>Bacteria</taxon>
        <taxon>Pseudomonadati</taxon>
        <taxon>Pseudomonadota</taxon>
        <taxon>Alphaproteobacteria</taxon>
        <taxon>Rhodobacterales</taxon>
        <taxon>Roseobacteraceae</taxon>
        <taxon>Ruegeria</taxon>
    </lineage>
</organism>
<gene>
    <name evidence="1" type="primary">speE</name>
    <name type="ordered locus">TM1040_1389</name>
</gene>
<proteinExistence type="inferred from homology"/>
<comment type="function">
    <text evidence="1">Catalyzes the irreversible transfer of a propylamine group from the amino donor S-adenosylmethioninamine (decarboxy-AdoMet) to putrescine (1,4-diaminobutane) to yield spermidine.</text>
</comment>
<comment type="catalytic activity">
    <reaction evidence="1">
        <text>S-adenosyl 3-(methylsulfanyl)propylamine + putrescine = S-methyl-5'-thioadenosine + spermidine + H(+)</text>
        <dbReference type="Rhea" id="RHEA:12721"/>
        <dbReference type="ChEBI" id="CHEBI:15378"/>
        <dbReference type="ChEBI" id="CHEBI:17509"/>
        <dbReference type="ChEBI" id="CHEBI:57443"/>
        <dbReference type="ChEBI" id="CHEBI:57834"/>
        <dbReference type="ChEBI" id="CHEBI:326268"/>
        <dbReference type="EC" id="2.5.1.16"/>
    </reaction>
</comment>
<comment type="pathway">
    <text evidence="1">Amine and polyamine biosynthesis; spermidine biosynthesis; spermidine from putrescine: step 1/1.</text>
</comment>
<comment type="subunit">
    <text evidence="1">Homodimer or homotetramer.</text>
</comment>
<comment type="subcellular location">
    <subcellularLocation>
        <location evidence="1">Cytoplasm</location>
    </subcellularLocation>
</comment>
<comment type="similarity">
    <text evidence="1">Belongs to the spermidine/spermine synthase family.</text>
</comment>
<evidence type="ECO:0000255" key="1">
    <source>
        <dbReference type="HAMAP-Rule" id="MF_00198"/>
    </source>
</evidence>
<sequence>MTKEVWNTERLHDHFAQSLRVSEMYYDSKTEHQRLKVFQNGTFGRVLTLDDVVQTTEGDNFIYHEMLTHVPILAHGAAKRVLIIGGGDGGIAREVLKHASVEHVTMVEIDAGVVDFSKEYLPMLSQGAFDDARLNLVINDGAVFMKETEDKFDVIIVDSTDPIGPGEVLFTDTFYGHAARALTEDGIIVTQNGVPFMQGDELTNTMRAFQALFQDATCYLATIPTYVGGPMALGWGSHSTKARSVDLTTLEARFAAAGLSPDYYTPEVHKAAFALPGYVKKLFP</sequence>
<feature type="chain" id="PRO_1000012021" description="Polyamine aminopropyltransferase">
    <location>
        <begin position="1"/>
        <end position="284"/>
    </location>
</feature>
<feature type="domain" description="PABS" evidence="1">
    <location>
        <begin position="4"/>
        <end position="238"/>
    </location>
</feature>
<feature type="active site" description="Proton acceptor" evidence="1">
    <location>
        <position position="158"/>
    </location>
</feature>
<feature type="binding site" evidence="1">
    <location>
        <position position="33"/>
    </location>
    <ligand>
        <name>S-methyl-5'-thioadenosine</name>
        <dbReference type="ChEBI" id="CHEBI:17509"/>
    </ligand>
</feature>
<feature type="binding site" evidence="1">
    <location>
        <position position="64"/>
    </location>
    <ligand>
        <name>spermidine</name>
        <dbReference type="ChEBI" id="CHEBI:57834"/>
    </ligand>
</feature>
<feature type="binding site" evidence="1">
    <location>
        <position position="88"/>
    </location>
    <ligand>
        <name>spermidine</name>
        <dbReference type="ChEBI" id="CHEBI:57834"/>
    </ligand>
</feature>
<feature type="binding site" evidence="1">
    <location>
        <position position="108"/>
    </location>
    <ligand>
        <name>S-methyl-5'-thioadenosine</name>
        <dbReference type="ChEBI" id="CHEBI:17509"/>
    </ligand>
</feature>
<feature type="binding site" evidence="1">
    <location>
        <begin position="140"/>
        <end position="141"/>
    </location>
    <ligand>
        <name>S-methyl-5'-thioadenosine</name>
        <dbReference type="ChEBI" id="CHEBI:17509"/>
    </ligand>
</feature>
<feature type="binding site" evidence="1">
    <location>
        <begin position="158"/>
        <end position="161"/>
    </location>
    <ligand>
        <name>spermidine</name>
        <dbReference type="ChEBI" id="CHEBI:57834"/>
    </ligand>
</feature>
<feature type="binding site" evidence="1">
    <location>
        <position position="165"/>
    </location>
    <ligand>
        <name>S-methyl-5'-thioadenosine</name>
        <dbReference type="ChEBI" id="CHEBI:17509"/>
    </ligand>
</feature>